<gene>
    <name evidence="1" type="primary">ycf48</name>
    <name type="ordered locus">tll1695</name>
</gene>
<organism>
    <name type="scientific">Thermosynechococcus vestitus (strain NIES-2133 / IAM M-273 / BP-1)</name>
    <dbReference type="NCBI Taxonomy" id="197221"/>
    <lineage>
        <taxon>Bacteria</taxon>
        <taxon>Bacillati</taxon>
        <taxon>Cyanobacteriota</taxon>
        <taxon>Cyanophyceae</taxon>
        <taxon>Acaryochloridales</taxon>
        <taxon>Thermosynechococcaceae</taxon>
        <taxon>Thermosynechococcus</taxon>
    </lineage>
</organism>
<comment type="function">
    <text evidence="1 4">A factor required for optimal assembly of photosystem II (PSII), acting in the early stages of PSII assembly. Also plays a role in replacement of photodamaged D1 (psbA). Assists YidC in synthesis of chlorophyll-binding proteins.</text>
</comment>
<comment type="subunit">
    <text evidence="2">Interacts with the D1 protein (crystallized with PsbA1 or PsbA3), via the latter's C-terminal prepropeptide, may interact with parts of the mature D1 protein as well.</text>
</comment>
<comment type="subcellular location">
    <subcellularLocation>
        <location evidence="1 4">Cellular thylakoid lumen</location>
    </subcellularLocation>
    <text evidence="1 4">Associated with a PSII precusor complex on the lumenal side of the thylakoid membrane.</text>
</comment>
<comment type="domain">
    <text evidence="2">A 7-bladed beta-propeller torus, about 54 by 46 Angstroms, with a depth of about 25 Angstroms and a central pore.</text>
</comment>
<comment type="similarity">
    <text evidence="1">Belongs to the Ycf48 family.</text>
</comment>
<sequence>MFAKQIDIHWQKMKGIKFLHWLLGTVLLWVSLSTPALAIPALDYNPWEAIQLPTTATILDMSFIDRHHGWLVGVNATLMETRDGGQTWEPRTLVLDHSDYRFNSVSFQGNEGWIVGEPPIMLHTTDGGQSWSQIPLDPKLPGSPRLIKALGNGSAEMITNVGAIYRTKDSGKNWQALVQEAIGVMRNLNRSPSGEYVAVSSRGSFYSTWEPGQTAWEPHNRTTSRRLHNMGFTPDGRLWMIVNGGKIAFSDPDNSENWGELLSPLRRNSVGFLDLAYRTPNEVWLAGGAGALLCSQDGGQTWQQDVDVKKVPSNFYKILFFSPDQGFILGQKGILLRYVTDLTAAPA</sequence>
<name>YCF48_THEVB</name>
<feature type="signal peptide" evidence="1">
    <location>
        <begin position="1"/>
        <end position="38"/>
    </location>
</feature>
<feature type="chain" id="PRO_0000239681" description="Photosystem II assembly protein Ycf48" evidence="1">
    <location>
        <begin position="39"/>
        <end position="347"/>
    </location>
</feature>
<feature type="short sequence motif" description="Arg-rich patch" evidence="2">
    <location>
        <begin position="202"/>
        <end position="226"/>
    </location>
</feature>
<feature type="mutagenesis site" description="No dramatic change from wild-type in 3D structure, replaces Arg-patch." evidence="2">
    <original>RGSFYSTWEPGQTAWEPHNRTTSRR</original>
    <variation>EGSFYSTWEPGQTAWEPHNETTSEE</variation>
    <location>
        <begin position="202"/>
        <end position="226"/>
    </location>
</feature>
<feature type="strand" evidence="10">
    <location>
        <begin position="47"/>
        <end position="51"/>
    </location>
</feature>
<feature type="strand" evidence="10">
    <location>
        <begin position="58"/>
        <end position="67"/>
    </location>
</feature>
<feature type="strand" evidence="10">
    <location>
        <begin position="69"/>
        <end position="73"/>
    </location>
</feature>
<feature type="turn" evidence="10">
    <location>
        <begin position="74"/>
        <end position="76"/>
    </location>
</feature>
<feature type="strand" evidence="10">
    <location>
        <begin position="77"/>
        <end position="83"/>
    </location>
</feature>
<feature type="strand" evidence="10">
    <location>
        <begin position="101"/>
        <end position="108"/>
    </location>
</feature>
<feature type="strand" evidence="10">
    <location>
        <begin position="111"/>
        <end position="117"/>
    </location>
</feature>
<feature type="strand" evidence="10">
    <location>
        <begin position="120"/>
        <end position="126"/>
    </location>
</feature>
<feature type="strand" evidence="11">
    <location>
        <begin position="129"/>
        <end position="133"/>
    </location>
</feature>
<feature type="strand" evidence="10">
    <location>
        <begin position="144"/>
        <end position="151"/>
    </location>
</feature>
<feature type="strand" evidence="10">
    <location>
        <begin position="154"/>
        <end position="159"/>
    </location>
</feature>
<feature type="strand" evidence="10">
    <location>
        <begin position="164"/>
        <end position="169"/>
    </location>
</feature>
<feature type="strand" evidence="10">
    <location>
        <begin position="175"/>
        <end position="178"/>
    </location>
</feature>
<feature type="strand" evidence="11">
    <location>
        <begin position="180"/>
        <end position="183"/>
    </location>
</feature>
<feature type="strand" evidence="10">
    <location>
        <begin position="186"/>
        <end position="190"/>
    </location>
</feature>
<feature type="strand" evidence="10">
    <location>
        <begin position="196"/>
        <end position="199"/>
    </location>
</feature>
<feature type="strand" evidence="10">
    <location>
        <begin position="203"/>
        <end position="209"/>
    </location>
</feature>
<feature type="strand" evidence="10">
    <location>
        <begin position="217"/>
        <end position="220"/>
    </location>
</feature>
<feature type="strand" evidence="10">
    <location>
        <begin position="222"/>
        <end position="225"/>
    </location>
</feature>
<feature type="strand" evidence="10">
    <location>
        <begin position="227"/>
        <end position="232"/>
    </location>
</feature>
<feature type="strand" evidence="10">
    <location>
        <begin position="238"/>
        <end position="242"/>
    </location>
</feature>
<feature type="turn" evidence="10">
    <location>
        <begin position="243"/>
        <end position="245"/>
    </location>
</feature>
<feature type="strand" evidence="10">
    <location>
        <begin position="246"/>
        <end position="251"/>
    </location>
</feature>
<feature type="strand" evidence="10">
    <location>
        <begin position="254"/>
        <end position="258"/>
    </location>
</feature>
<feature type="strand" evidence="10">
    <location>
        <begin position="266"/>
        <end position="270"/>
    </location>
</feature>
<feature type="strand" evidence="10">
    <location>
        <begin position="272"/>
        <end position="281"/>
    </location>
</feature>
<feature type="strand" evidence="10">
    <location>
        <begin position="283"/>
        <end position="288"/>
    </location>
</feature>
<feature type="strand" evidence="10">
    <location>
        <begin position="292"/>
        <end position="297"/>
    </location>
</feature>
<feature type="helix" evidence="10">
    <location>
        <begin position="306"/>
        <end position="310"/>
    </location>
</feature>
<feature type="strand" evidence="9">
    <location>
        <begin position="311"/>
        <end position="313"/>
    </location>
</feature>
<feature type="strand" evidence="10">
    <location>
        <begin position="317"/>
        <end position="322"/>
    </location>
</feature>
<feature type="strand" evidence="10">
    <location>
        <begin position="325"/>
        <end position="329"/>
    </location>
</feature>
<feature type="strand" evidence="10">
    <location>
        <begin position="334"/>
        <end position="338"/>
    </location>
</feature>
<evidence type="ECO:0000255" key="1">
    <source>
        <dbReference type="HAMAP-Rule" id="MF_01348"/>
    </source>
</evidence>
<evidence type="ECO:0000269" key="2">
    <source>
    </source>
</evidence>
<evidence type="ECO:0000303" key="3">
    <source>
    </source>
</evidence>
<evidence type="ECO:0000305" key="4">
    <source>
    </source>
</evidence>
<evidence type="ECO:0007744" key="5">
    <source>
        <dbReference type="PDB" id="2XBG"/>
    </source>
</evidence>
<evidence type="ECO:0007744" key="6">
    <source>
        <dbReference type="PDB" id="5OJ5"/>
    </source>
</evidence>
<evidence type="ECO:0007744" key="7">
    <source>
        <dbReference type="PDB" id="5OJP"/>
    </source>
</evidence>
<evidence type="ECO:0007744" key="8">
    <source>
        <dbReference type="PDB" id="5OJR"/>
    </source>
</evidence>
<evidence type="ECO:0007829" key="9">
    <source>
        <dbReference type="PDB" id="2XBG"/>
    </source>
</evidence>
<evidence type="ECO:0007829" key="10">
    <source>
        <dbReference type="PDB" id="5OJ5"/>
    </source>
</evidence>
<evidence type="ECO:0007829" key="11">
    <source>
        <dbReference type="PDB" id="5OJR"/>
    </source>
</evidence>
<accession>Q8DI95</accession>
<protein>
    <recommendedName>
        <fullName evidence="1 3">Photosystem II assembly protein Ycf48</fullName>
    </recommendedName>
</protein>
<dbReference type="EMBL" id="BA000039">
    <property type="protein sequence ID" value="BAC09247.1"/>
    <property type="molecule type" value="Genomic_DNA"/>
</dbReference>
<dbReference type="RefSeq" id="NP_682485.1">
    <property type="nucleotide sequence ID" value="NC_004113.1"/>
</dbReference>
<dbReference type="RefSeq" id="WP_011057532.1">
    <property type="nucleotide sequence ID" value="NC_004113.1"/>
</dbReference>
<dbReference type="PDB" id="2XBG">
    <property type="method" value="X-ray"/>
    <property type="resolution" value="1.50 A"/>
    <property type="chains" value="A=38-347"/>
</dbReference>
<dbReference type="PDB" id="5OJ5">
    <property type="method" value="X-ray"/>
    <property type="resolution" value="1.08 A"/>
    <property type="chains" value="A=1-347"/>
</dbReference>
<dbReference type="PDB" id="5OJP">
    <property type="method" value="X-ray"/>
    <property type="resolution" value="1.86 A"/>
    <property type="chains" value="A/B/C=39-347"/>
</dbReference>
<dbReference type="PDB" id="5OJR">
    <property type="method" value="X-ray"/>
    <property type="resolution" value="1.96 A"/>
    <property type="chains" value="A/B/C/D=39-347"/>
</dbReference>
<dbReference type="PDBsum" id="2XBG"/>
<dbReference type="PDBsum" id="5OJ5"/>
<dbReference type="PDBsum" id="5OJP"/>
<dbReference type="PDBsum" id="5OJR"/>
<dbReference type="SMR" id="Q8DI95"/>
<dbReference type="STRING" id="197221.gene:10748299"/>
<dbReference type="EnsemblBacteria" id="BAC09247">
    <property type="protein sequence ID" value="BAC09247"/>
    <property type="gene ID" value="BAC09247"/>
</dbReference>
<dbReference type="KEGG" id="tel:tll1695"/>
<dbReference type="PATRIC" id="fig|197221.4.peg.1776"/>
<dbReference type="eggNOG" id="COG4447">
    <property type="taxonomic scope" value="Bacteria"/>
</dbReference>
<dbReference type="EvolutionaryTrace" id="Q8DI95"/>
<dbReference type="Proteomes" id="UP000000440">
    <property type="component" value="Chromosome"/>
</dbReference>
<dbReference type="GO" id="GO:0009523">
    <property type="term" value="C:photosystem II"/>
    <property type="evidence" value="ECO:0007669"/>
    <property type="project" value="UniProtKB-KW"/>
</dbReference>
<dbReference type="GO" id="GO:0031979">
    <property type="term" value="C:plasma membrane-derived thylakoid lumen"/>
    <property type="evidence" value="ECO:0007669"/>
    <property type="project" value="UniProtKB-SubCell"/>
</dbReference>
<dbReference type="GO" id="GO:0015979">
    <property type="term" value="P:photosynthesis"/>
    <property type="evidence" value="ECO:0007669"/>
    <property type="project" value="UniProtKB-KW"/>
</dbReference>
<dbReference type="CDD" id="cd15482">
    <property type="entry name" value="Sialidase_non-viral"/>
    <property type="match status" value="1"/>
</dbReference>
<dbReference type="Gene3D" id="2.130.10.10">
    <property type="entry name" value="YVTN repeat-like/Quinoprotein amine dehydrogenase"/>
    <property type="match status" value="2"/>
</dbReference>
<dbReference type="HAMAP" id="MF_01348">
    <property type="entry name" value="Ycf48"/>
    <property type="match status" value="1"/>
</dbReference>
<dbReference type="InterPro" id="IPR028203">
    <property type="entry name" value="PSII_CF48-like_dom"/>
</dbReference>
<dbReference type="InterPro" id="IPR015943">
    <property type="entry name" value="WD40/YVTN_repeat-like_dom_sf"/>
</dbReference>
<dbReference type="InterPro" id="IPR016705">
    <property type="entry name" value="Ycf48/Hcf136"/>
</dbReference>
<dbReference type="NCBIfam" id="NF010237">
    <property type="entry name" value="PRK13684.1"/>
    <property type="match status" value="1"/>
</dbReference>
<dbReference type="PANTHER" id="PTHR47199">
    <property type="entry name" value="PHOTOSYSTEM II STABILITY/ASSEMBLY FACTOR HCF136, CHLOROPLASTIC"/>
    <property type="match status" value="1"/>
</dbReference>
<dbReference type="PANTHER" id="PTHR47199:SF2">
    <property type="entry name" value="PHOTOSYSTEM II STABILITY_ASSEMBLY FACTOR HCF136, CHLOROPLASTIC"/>
    <property type="match status" value="1"/>
</dbReference>
<dbReference type="Pfam" id="PF14870">
    <property type="entry name" value="PSII_BNR"/>
    <property type="match status" value="1"/>
</dbReference>
<dbReference type="PIRSF" id="PIRSF017875">
    <property type="entry name" value="PSII_HCF136"/>
    <property type="match status" value="1"/>
</dbReference>
<dbReference type="SUPFAM" id="SSF110296">
    <property type="entry name" value="Oligoxyloglucan reducing end-specific cellobiohydrolase"/>
    <property type="match status" value="1"/>
</dbReference>
<reference key="1">
    <citation type="journal article" date="2002" name="DNA Res.">
        <title>Complete genome structure of the thermophilic cyanobacterium Thermosynechococcus elongatus BP-1.</title>
        <authorList>
            <person name="Nakamura Y."/>
            <person name="Kaneko T."/>
            <person name="Sato S."/>
            <person name="Ikeuchi M."/>
            <person name="Katoh H."/>
            <person name="Sasamoto S."/>
            <person name="Watanabe A."/>
            <person name="Iriguchi M."/>
            <person name="Kawashima K."/>
            <person name="Kimura T."/>
            <person name="Kishida Y."/>
            <person name="Kiyokawa C."/>
            <person name="Kohara M."/>
            <person name="Matsumoto M."/>
            <person name="Matsuno A."/>
            <person name="Nakazaki N."/>
            <person name="Shimpo S."/>
            <person name="Sugimoto M."/>
            <person name="Takeuchi C."/>
            <person name="Yamada M."/>
            <person name="Tabata S."/>
        </authorList>
    </citation>
    <scope>NUCLEOTIDE SEQUENCE [LARGE SCALE GENOMIC DNA]</scope>
    <source>
        <strain>NIES-2133 / IAM M-273 / BP-1</strain>
    </source>
</reference>
<reference evidence="5 6 7 8" key="2">
    <citation type="journal article" date="2018" name="Proc. Natl. Acad. Sci. U.S.A.">
        <title>Ycf48 involved in the biogenesis of the oxygen-evolving photosystem II complex is a seven-bladed beta-propeller protein.</title>
        <authorList>
            <person name="Yu J."/>
            <person name="Knoppova J."/>
            <person name="Michoux F."/>
            <person name="Bialek W."/>
            <person name="Cota E."/>
            <person name="Shukla M.K."/>
            <person name="Straskova A."/>
            <person name="Pascual Aznar G."/>
            <person name="Sobotka R."/>
            <person name="Komenda J."/>
            <person name="Murray J.W."/>
            <person name="Nixon P.J."/>
        </authorList>
    </citation>
    <scope>X-RAY CRYSTALLOGRAPHY (1.08 ANGSTROMS) WILD-TYPE AND MUTATED IN COMPLEX WITH D1 C-TERMINAL PEPTIDES</scope>
    <scope>PROBABLE FUNCTION</scope>
    <scope>INTERACTION WITH PSBA</scope>
    <scope>DOMAIN</scope>
    <scope>MUTAGENESIS OF 202-ARG--ARG-226</scope>
    <source>
        <strain>NIES-2133 / IAM M-273 / BP-1</strain>
    </source>
</reference>
<proteinExistence type="evidence at protein level"/>
<keyword id="KW-0002">3D-structure</keyword>
<keyword id="KW-0602">Photosynthesis</keyword>
<keyword id="KW-0604">Photosystem II</keyword>
<keyword id="KW-1185">Reference proteome</keyword>
<keyword id="KW-0732">Signal</keyword>
<keyword id="KW-0793">Thylakoid</keyword>